<name>MKS3_HUMAN</name>
<dbReference type="EMBL" id="BX648768">
    <property type="protein sequence ID" value="CAI45999.1"/>
    <property type="molecule type" value="mRNA"/>
</dbReference>
<dbReference type="EMBL" id="AC010834">
    <property type="status" value="NOT_ANNOTATED_CDS"/>
    <property type="molecule type" value="Genomic_DNA"/>
</dbReference>
<dbReference type="EMBL" id="CH471060">
    <property type="protein sequence ID" value="EAW91703.1"/>
    <property type="status" value="ALT_SEQ"/>
    <property type="molecule type" value="Genomic_DNA"/>
</dbReference>
<dbReference type="EMBL" id="AK092244">
    <property type="protein sequence ID" value="BAG52507.1"/>
    <property type="status" value="ALT_SEQ"/>
    <property type="molecule type" value="mRNA"/>
</dbReference>
<dbReference type="EMBL" id="AK094935">
    <property type="protein sequence ID" value="BAG52959.1"/>
    <property type="status" value="ALT_INIT"/>
    <property type="molecule type" value="mRNA"/>
</dbReference>
<dbReference type="EMBL" id="BC032835">
    <property type="protein sequence ID" value="AAH32835.1"/>
    <property type="status" value="ALT_INIT"/>
    <property type="molecule type" value="mRNA"/>
</dbReference>
<dbReference type="CCDS" id="CCDS6258.2"/>
<dbReference type="RefSeq" id="NP_001135773.1">
    <property type="nucleotide sequence ID" value="NM_001142301.1"/>
</dbReference>
<dbReference type="RefSeq" id="NP_714915.3">
    <property type="nucleotide sequence ID" value="NM_153704.5"/>
</dbReference>
<dbReference type="PDB" id="7FH1">
    <property type="method" value="EM"/>
    <property type="resolution" value="3.34 A"/>
    <property type="chains" value="A/B=1-995"/>
</dbReference>
<dbReference type="PDBsum" id="7FH1"/>
<dbReference type="EMDB" id="EMD-31584"/>
<dbReference type="SMR" id="Q5HYA8"/>
<dbReference type="BioGRID" id="124799">
    <property type="interactions" value="148"/>
</dbReference>
<dbReference type="ComplexPortal" id="CPX-2531">
    <property type="entry name" value="MKS transition zone complex"/>
</dbReference>
<dbReference type="CORUM" id="Q5HYA8"/>
<dbReference type="FunCoup" id="Q5HYA8">
    <property type="interactions" value="858"/>
</dbReference>
<dbReference type="IntAct" id="Q5HYA8">
    <property type="interactions" value="122"/>
</dbReference>
<dbReference type="STRING" id="9606.ENSP00000389998"/>
<dbReference type="TCDB" id="9.B.77.1.1">
    <property type="family name" value="the meckel syndrome protein (meckelin) family"/>
</dbReference>
<dbReference type="GlyCosmos" id="Q5HYA8">
    <property type="glycosylation" value="1 site, No reported glycans"/>
</dbReference>
<dbReference type="GlyGen" id="Q5HYA8">
    <property type="glycosylation" value="4 sites, 2 N-linked glycans (1 site)"/>
</dbReference>
<dbReference type="iPTMnet" id="Q5HYA8"/>
<dbReference type="PhosphoSitePlus" id="Q5HYA8"/>
<dbReference type="BioMuta" id="TMEM67"/>
<dbReference type="DMDM" id="317373389"/>
<dbReference type="jPOST" id="Q5HYA8"/>
<dbReference type="MassIVE" id="Q5HYA8"/>
<dbReference type="PaxDb" id="9606-ENSP00000389998"/>
<dbReference type="PeptideAtlas" id="Q5HYA8"/>
<dbReference type="ProteomicsDB" id="33938"/>
<dbReference type="Pumba" id="Q5HYA8"/>
<dbReference type="Antibodypedia" id="25725">
    <property type="antibodies" value="87 antibodies from 25 providers"/>
</dbReference>
<dbReference type="DNASU" id="91147"/>
<dbReference type="Ensembl" id="ENST00000323130.8">
    <property type="protein sequence ID" value="ENSP00000314488.4"/>
    <property type="gene ID" value="ENSG00000164953.17"/>
</dbReference>
<dbReference type="Ensembl" id="ENST00000453321.8">
    <property type="protein sequence ID" value="ENSP00000389998.3"/>
    <property type="gene ID" value="ENSG00000164953.17"/>
</dbReference>
<dbReference type="GeneID" id="91147"/>
<dbReference type="KEGG" id="hsa:91147"/>
<dbReference type="MANE-Select" id="ENST00000453321.8">
    <property type="protein sequence ID" value="ENSP00000389998.3"/>
    <property type="RefSeq nucleotide sequence ID" value="NM_153704.6"/>
    <property type="RefSeq protein sequence ID" value="NP_714915.3"/>
</dbReference>
<dbReference type="UCSC" id="uc003yga.5">
    <property type="organism name" value="human"/>
</dbReference>
<dbReference type="AGR" id="HGNC:28396"/>
<dbReference type="CTD" id="91147"/>
<dbReference type="DisGeNET" id="91147"/>
<dbReference type="GeneCards" id="TMEM67"/>
<dbReference type="GeneReviews" id="TMEM67"/>
<dbReference type="HGNC" id="HGNC:28396">
    <property type="gene designation" value="TMEM67"/>
</dbReference>
<dbReference type="HPA" id="ENSG00000164953">
    <property type="expression patterns" value="Tissue enhanced (heart)"/>
</dbReference>
<dbReference type="MalaCards" id="TMEM67"/>
<dbReference type="MIM" id="216360">
    <property type="type" value="phenotype"/>
</dbReference>
<dbReference type="MIM" id="602152">
    <property type="type" value="phenotype"/>
</dbReference>
<dbReference type="MIM" id="607361">
    <property type="type" value="phenotype"/>
</dbReference>
<dbReference type="MIM" id="609884">
    <property type="type" value="gene"/>
</dbReference>
<dbReference type="MIM" id="610688">
    <property type="type" value="phenotype"/>
</dbReference>
<dbReference type="MIM" id="613550">
    <property type="type" value="phenotype"/>
</dbReference>
<dbReference type="MIM" id="615991">
    <property type="type" value="phenotype"/>
</dbReference>
<dbReference type="neXtProt" id="NX_Q5HYA8"/>
<dbReference type="OpenTargets" id="ENSG00000164953"/>
<dbReference type="Orphanet" id="475">
    <property type="disease" value="Joubert syndrome"/>
</dbReference>
<dbReference type="Orphanet" id="1454">
    <property type="disease" value="Joubert syndrome with hepatic defect"/>
</dbReference>
<dbReference type="Orphanet" id="564">
    <property type="disease" value="Meckel syndrome"/>
</dbReference>
<dbReference type="Orphanet" id="140976">
    <property type="disease" value="RHYNS syndrome"/>
</dbReference>
<dbReference type="Orphanet" id="84081">
    <property type="disease" value="Senior-Boichis syndrome"/>
</dbReference>
<dbReference type="PharmGKB" id="PA142670780"/>
<dbReference type="VEuPathDB" id="HostDB:ENSG00000164953"/>
<dbReference type="eggNOG" id="KOG4611">
    <property type="taxonomic scope" value="Eukaryota"/>
</dbReference>
<dbReference type="GeneTree" id="ENSGT00390000010606"/>
<dbReference type="InParanoid" id="Q5HYA8"/>
<dbReference type="OMA" id="YITENKG"/>
<dbReference type="OrthoDB" id="419138at2759"/>
<dbReference type="PAN-GO" id="Q5HYA8">
    <property type="GO annotations" value="2 GO annotations based on evolutionary models"/>
</dbReference>
<dbReference type="PhylomeDB" id="Q5HYA8"/>
<dbReference type="TreeFam" id="TF317053"/>
<dbReference type="PathwayCommons" id="Q5HYA8"/>
<dbReference type="Reactome" id="R-HSA-5620912">
    <property type="pathway name" value="Anchoring of the basal body to the plasma membrane"/>
</dbReference>
<dbReference type="SignaLink" id="Q5HYA8"/>
<dbReference type="BioGRID-ORCS" id="91147">
    <property type="hits" value="5 hits in 1155 CRISPR screens"/>
</dbReference>
<dbReference type="ChiTaRS" id="TMEM67">
    <property type="organism name" value="human"/>
</dbReference>
<dbReference type="GeneWiki" id="TMEM67"/>
<dbReference type="GenomeRNAi" id="91147"/>
<dbReference type="Pharos" id="Q5HYA8">
    <property type="development level" value="Tbio"/>
</dbReference>
<dbReference type="PRO" id="PR:Q5HYA8"/>
<dbReference type="Proteomes" id="UP000005640">
    <property type="component" value="Chromosome 8"/>
</dbReference>
<dbReference type="RNAct" id="Q5HYA8">
    <property type="molecule type" value="protein"/>
</dbReference>
<dbReference type="Bgee" id="ENSG00000164953">
    <property type="expression patterns" value="Expressed in buccal mucosa cell and 138 other cell types or tissues"/>
</dbReference>
<dbReference type="ExpressionAtlas" id="Q5HYA8">
    <property type="expression patterns" value="baseline and differential"/>
</dbReference>
<dbReference type="GO" id="GO:0005813">
    <property type="term" value="C:centrosome"/>
    <property type="evidence" value="ECO:0000314"/>
    <property type="project" value="UniProtKB"/>
</dbReference>
<dbReference type="GO" id="GO:0060170">
    <property type="term" value="C:ciliary membrane"/>
    <property type="evidence" value="ECO:0000314"/>
    <property type="project" value="UniProtKB"/>
</dbReference>
<dbReference type="GO" id="GO:0035869">
    <property type="term" value="C:ciliary transition zone"/>
    <property type="evidence" value="ECO:0000314"/>
    <property type="project" value="WormBase"/>
</dbReference>
<dbReference type="GO" id="GO:0030659">
    <property type="term" value="C:cytoplasmic vesicle membrane"/>
    <property type="evidence" value="ECO:0000314"/>
    <property type="project" value="UniProtKB"/>
</dbReference>
<dbReference type="GO" id="GO:0005789">
    <property type="term" value="C:endoplasmic reticulum membrane"/>
    <property type="evidence" value="ECO:0000314"/>
    <property type="project" value="UniProtKB"/>
</dbReference>
<dbReference type="GO" id="GO:0036038">
    <property type="term" value="C:MKS complex"/>
    <property type="evidence" value="ECO:0000250"/>
    <property type="project" value="UniProtKB"/>
</dbReference>
<dbReference type="GO" id="GO:0031005">
    <property type="term" value="F:filamin binding"/>
    <property type="evidence" value="ECO:0000353"/>
    <property type="project" value="UniProtKB"/>
</dbReference>
<dbReference type="GO" id="GO:0051082">
    <property type="term" value="F:unfolded protein binding"/>
    <property type="evidence" value="ECO:0000353"/>
    <property type="project" value="UniProtKB"/>
</dbReference>
<dbReference type="GO" id="GO:0060271">
    <property type="term" value="P:cilium assembly"/>
    <property type="evidence" value="ECO:0000315"/>
    <property type="project" value="UniProtKB"/>
</dbReference>
<dbReference type="GO" id="GO:0036503">
    <property type="term" value="P:ERAD pathway"/>
    <property type="evidence" value="ECO:0000315"/>
    <property type="project" value="UniProtKB"/>
</dbReference>
<dbReference type="GO" id="GO:0010826">
    <property type="term" value="P:negative regulation of centrosome duplication"/>
    <property type="evidence" value="ECO:0000315"/>
    <property type="project" value="UniProtKB"/>
</dbReference>
<dbReference type="GO" id="GO:0035567">
    <property type="term" value="P:non-canonical Wnt signaling pathway"/>
    <property type="evidence" value="ECO:0000315"/>
    <property type="project" value="UniProtKB"/>
</dbReference>
<dbReference type="InterPro" id="IPR009030">
    <property type="entry name" value="Growth_fac_rcpt_cys_sf"/>
</dbReference>
<dbReference type="InterPro" id="IPR019170">
    <property type="entry name" value="Meckelin"/>
</dbReference>
<dbReference type="PANTHER" id="PTHR21274">
    <property type="entry name" value="MECKELIN"/>
    <property type="match status" value="1"/>
</dbReference>
<dbReference type="PANTHER" id="PTHR21274:SF2">
    <property type="entry name" value="MECKELIN"/>
    <property type="match status" value="1"/>
</dbReference>
<dbReference type="Pfam" id="PF09773">
    <property type="entry name" value="Meckelin"/>
    <property type="match status" value="1"/>
</dbReference>
<dbReference type="SUPFAM" id="SSF57184">
    <property type="entry name" value="Growth factor receptor domain"/>
    <property type="match status" value="1"/>
</dbReference>
<organism>
    <name type="scientific">Homo sapiens</name>
    <name type="common">Human</name>
    <dbReference type="NCBI Taxonomy" id="9606"/>
    <lineage>
        <taxon>Eukaryota</taxon>
        <taxon>Metazoa</taxon>
        <taxon>Chordata</taxon>
        <taxon>Craniata</taxon>
        <taxon>Vertebrata</taxon>
        <taxon>Euteleostomi</taxon>
        <taxon>Mammalia</taxon>
        <taxon>Eutheria</taxon>
        <taxon>Euarchontoglires</taxon>
        <taxon>Primates</taxon>
        <taxon>Haplorrhini</taxon>
        <taxon>Catarrhini</taxon>
        <taxon>Hominidae</taxon>
        <taxon>Homo</taxon>
    </lineage>
</organism>
<accession>Q5HYA8</accession>
<accession>B3KRU5</accession>
<accession>B3KT47</accession>
<accession>G5E9H2</accession>
<accession>Q3ZCX3</accession>
<accession>Q7Z5T8</accession>
<accession>Q8IZ06</accession>
<comment type="function">
    <text evidence="1 6 13 15 16 20">Required for ciliary structure and function. Part of the tectonic-like complex which is required for tissue-specific ciliogenesis and may regulate ciliary membrane composition (By similarity). Involved in centrosome migration to the apical cell surface during early ciliogenesis. Involved in the regulation of cilia length and appropriate number through the control of centrosome duplication. Is a key regulator of stereociliary bundle orientation (By similarity). Required for epithelial cell branching morphology. Essential for endoplasmic reticulum-associated degradation (ERAD) of surfactant protein C (SFTPC). Involved in the negative regulation of canonical Wnt signaling, and activation of the non-canonical cascade stimulated by WNT5A (PubMed:26035863). In non-canonical Wnt signaling, it may act as ROR2 coreceptor (By similarity).</text>
</comment>
<comment type="subunit">
    <text evidence="1 6 15 16 19 20 27 29">Homodimer (PubMed:34731008). Part of the tectonic-like complex (also named B9 complex) (By similarity). Interacts with DNAJB9, DNAJC10 and mutated SFTPC. Interacts with SYNE2 during the early establishment of cell polarity. Interacts (via C-terminus) with FLNA. Interacts with TMEM218 (PubMed:35137054). Interacts with WNT5A (PubMed:26035863, PubMed:34731008). Interacts with ROR2 (PubMed:26035863).</text>
</comment>
<comment type="interaction">
    <interactant intactId="EBI-11334880">
        <id>Q5HYA8</id>
    </interactant>
    <interactant intactId="EBI-17264467">
        <id>P05067-2</id>
        <label>APP</label>
    </interactant>
    <organismsDiffer>false</organismsDiffer>
    <experiments>3</experiments>
</comment>
<comment type="subcellular location">
    <subcellularLocation>
        <location evidence="6">Cell membrane</location>
        <topology evidence="2">Multi-pass membrane protein</topology>
    </subcellularLocation>
    <subcellularLocation>
        <location evidence="16">Endoplasmic reticulum membrane</location>
        <topology evidence="2">Multi-pass membrane protein</topology>
    </subcellularLocation>
    <subcellularLocation>
        <location evidence="6">Cell projection</location>
        <location evidence="6">Cilium</location>
    </subcellularLocation>
    <subcellularLocation>
        <location evidence="19">Cytoplasm</location>
        <location evidence="19">Cytoskeleton</location>
        <location evidence="19">Cilium basal body</location>
    </subcellularLocation>
    <text evidence="19">Localizes at the transition zone, a region between the basal body and the ciliary axoneme (PubMed:22121117).</text>
</comment>
<comment type="tissue specificity">
    <text evidence="4 6">Widely expressed in adult and fetal tissues. Expressed at higher level in spinal cord.</text>
</comment>
<comment type="disease">
    <text evidence="9 18">TMEM67 mutations result in ciliary dysfunction leading to a broad spectrum of disorders, collectively termed ciliopathies. Overlapping clinical features include retinal degeneration, renal cystic disease, skeletal abnormalities, fibrosis of various organ, and a complex range of anatomical and functional defects of the central and peripheral nervous system. The ciliopathy range of diseases includes Meckel-Gruber syndrome, Bardet-Biedl syndrome, Joubert syndrome, and nephronophtisis among others. Single-locus allelism is insufficient to explain the variable penetrance and expressivity of such disorders, leading to the suggestion that variations across multiple sites of the ciliary proteome influence the clinical outcome.</text>
</comment>
<comment type="disease" evidence="4 6 7 11 17 20 21 25 28">
    <disease id="DI-00701">
        <name>Meckel syndrome 3</name>
        <acronym>MKS3</acronym>
        <description>A disorder characterized by a combination of renal cysts and variably associated features including developmental anomalies of the central nervous system (typically encephalocele), hepatic ductal dysplasia and cysts, and polydactyly.</description>
        <dbReference type="MIM" id="607361"/>
    </disease>
    <text>The disease is caused by variants affecting the gene represented in this entry.</text>
</comment>
<comment type="disease" evidence="5 12 14 18 22 26">
    <disease id="DI-00609">
        <name>Joubert syndrome 6</name>
        <acronym>JBTS6</acronym>
        <description>A disorder presenting with cerebellar ataxia, oculomotor apraxia, hypotonia, neonatal breathing abnormalities and psychomotor delay. Neuroradiologically, it is characterized by cerebellar vermian hypoplasia/aplasia, thickened and reoriented superior cerebellar peduncles, and an abnormally large interpeduncular fossa, giving the appearance of a molar tooth on transaxial slices (molar tooth sign). Additional variable features include retinal dystrophy and renal disease.</description>
        <dbReference type="MIM" id="610688"/>
    </disease>
    <text>The disease is caused by variants affecting the gene represented in this entry.</text>
</comment>
<comment type="disease" evidence="9">
    <disease id="DI-02607">
        <name>Bardet-Biedl syndrome 14</name>
        <acronym>BBS14</acronym>
        <description>A syndrome characterized by usually severe pigmentary retinopathy, early-onset obesity, polydactyly, hypogenitalism, renal malformation and intellectual disability. Secondary features include diabetes mellitus, hypertension and congenital heart disease. Bardet-Biedl syndrome inheritance is autosomal recessive, but three mutated alleles (two at one locus, and a third at a second locus) may be required for clinical manifestation of some forms of the disease.</description>
        <dbReference type="MIM" id="615991"/>
    </disease>
    <text>The gene represented in this entry may act as a disease modifier. TMEM67 variations may influence the expression of Bardet-Biedl syndrome in patients who have causative mutations in other genes. Heterozygosity for a complex mutation in the TMEM67 gene coding for a protein with 2 in cis changes, and homozygosity for a truncating mutation of the CEP290 gene has been found in a patient with Bardet-Biedl syndrome 14.</text>
</comment>
<comment type="disease" evidence="10 14 23 28">
    <disease id="DI-02835">
        <name>COACH syndrome 1</name>
        <acronym>COACH1</acronym>
        <description>A form of COACH syndrome, a disorder characterized by cerebellar vermis hypoplasia, developmental delay, impaired intellectual development, ataxia, and hepatic fibrosis. Patients present the molar tooth sign, a midbrain-hindbrain malformation pathognomonic for Joubert syndrome and related disorders. Other features, such as coloboma and renal cysts, may be variable. COACH1 inheritance is autosomal recessive.</description>
        <dbReference type="MIM" id="216360"/>
    </disease>
    <text>The disease is caused by variants affecting the gene represented in this entry.</text>
</comment>
<comment type="disease" evidence="12">
    <disease id="DI-02898">
        <name>Nephronophthisis 11</name>
        <acronym>NPHP11</acronym>
        <description>A disorder characterized by the association of nephronophthisis with hepatic fibrosis. Nephronophthisis is a progressive tubulo-interstitial kidney disorder histologically characterized by modifications of the tubules with thickening of the basement membrane, interstitial fibrosis and, in the advanced stages, medullary cysts. Typical clinical features are chronic renal failure, anemia, polyuria, polydipsia, isosthenuria, and growth retardation. Associations with extrarenal symptoms, especially ocular lesions, are frequent.</description>
        <dbReference type="MIM" id="613550"/>
    </disease>
    <text>The disease is caused by variants affecting the gene represented in this entry.</text>
</comment>
<comment type="disease" evidence="24">
    <disease id="DI-05440">
        <name>RHYNS syndrome</name>
        <acronym>RHYNS</acronym>
        <description>An autosomal recessive syndrome characterized by gaze palsy, retinitis pigmentosa, sensorineural hearing loss, hypopituitarism, nephronophthisis, and skeletal dysplasia.</description>
        <dbReference type="MIM" id="602152"/>
    </disease>
    <text>The disease is caused by variants affecting the gene represented in this entry.</text>
</comment>
<comment type="sequence caution" evidence="30">
    <conflict type="erroneous initiation">
        <sequence resource="EMBL-CDS" id="AAH32835"/>
    </conflict>
    <text>Truncated N-terminus.</text>
</comment>
<comment type="sequence caution" evidence="30">
    <conflict type="miscellaneous discrepancy">
        <sequence resource="EMBL-CDS" id="BAG52507"/>
    </conflict>
    <text>Probable cloning artifact.</text>
</comment>
<comment type="sequence caution" evidence="30">
    <conflict type="erroneous initiation">
        <sequence resource="EMBL-CDS" id="BAG52959"/>
    </conflict>
    <text>Truncated N-terminus.</text>
</comment>
<comment type="sequence caution" evidence="30">
    <conflict type="erroneous gene model prediction">
        <sequence resource="EMBL-CDS" id="EAW91703"/>
    </conflict>
</comment>
<proteinExistence type="evidence at protein level"/>
<evidence type="ECO:0000250" key="1">
    <source>
        <dbReference type="UniProtKB" id="Q8BR76"/>
    </source>
</evidence>
<evidence type="ECO:0000255" key="2"/>
<evidence type="ECO:0000269" key="3">
    <source>
    </source>
</evidence>
<evidence type="ECO:0000269" key="4">
    <source>
    </source>
</evidence>
<evidence type="ECO:0000269" key="5">
    <source>
    </source>
</evidence>
<evidence type="ECO:0000269" key="6">
    <source>
    </source>
</evidence>
<evidence type="ECO:0000269" key="7">
    <source>
    </source>
</evidence>
<evidence type="ECO:0000269" key="8">
    <source>
    </source>
</evidence>
<evidence type="ECO:0000269" key="9">
    <source>
    </source>
</evidence>
<evidence type="ECO:0000269" key="10">
    <source>
    </source>
</evidence>
<evidence type="ECO:0000269" key="11">
    <source>
    </source>
</evidence>
<evidence type="ECO:0000269" key="12">
    <source>
    </source>
</evidence>
<evidence type="ECO:0000269" key="13">
    <source>
    </source>
</evidence>
<evidence type="ECO:0000269" key="14">
    <source>
    </source>
</evidence>
<evidence type="ECO:0000269" key="15">
    <source>
    </source>
</evidence>
<evidence type="ECO:0000269" key="16">
    <source>
    </source>
</evidence>
<evidence type="ECO:0000269" key="17">
    <source>
    </source>
</evidence>
<evidence type="ECO:0000269" key="18">
    <source>
    </source>
</evidence>
<evidence type="ECO:0000269" key="19">
    <source>
    </source>
</evidence>
<evidence type="ECO:0000269" key="20">
    <source>
    </source>
</evidence>
<evidence type="ECO:0000269" key="21">
    <source>
    </source>
</evidence>
<evidence type="ECO:0000269" key="22">
    <source>
    </source>
</evidence>
<evidence type="ECO:0000269" key="23">
    <source>
    </source>
</evidence>
<evidence type="ECO:0000269" key="24">
    <source>
    </source>
</evidence>
<evidence type="ECO:0000269" key="25">
    <source>
    </source>
</evidence>
<evidence type="ECO:0000269" key="26">
    <source>
    </source>
</evidence>
<evidence type="ECO:0000269" key="27">
    <source>
    </source>
</evidence>
<evidence type="ECO:0000269" key="28">
    <source>
    </source>
</evidence>
<evidence type="ECO:0000269" key="29">
    <source>
    </source>
</evidence>
<evidence type="ECO:0000305" key="30"/>
<evidence type="ECO:0007744" key="31">
    <source>
        <dbReference type="PDB" id="7FH1"/>
    </source>
</evidence>
<evidence type="ECO:0007829" key="32">
    <source>
        <dbReference type="PDB" id="7FH1"/>
    </source>
</evidence>
<sequence length="995" mass="111745">MATRGGAGVAMAVWSLLSARAVTAFLLLFLPRFLQAQTFSFPFQQPEKCDNNQYFDISALSCVPCGANQRQDARGTSCVCLPGFQMISNNGGPAIICKKCPENMKGVTEDGWNCISCPSDLTAEGKCHCPIGHILVERDINGTLLSQATCELCDGNENSFMVVNALGDRCVRCEPTFVNTSRSCACSEPNILTGGLCFSSTGNFPLRRISAARYGEVGMSLTSEWFAKYLQSSAAACWVYANLTSCQALGNMCVMNMNSYDFATFDACGLFQFIFENTAGLSTVHSISFWRQNLPWLFYGDQLGLAPQVLSSTSLPTNFSFKGENQNTKLKFVAASYDIRGNFLKWQTLEGGVLQLCPDTETRLNAAYSFGTTYQQNCEIPISKILIDFPTPIFYDVYLEYTDENQHQYILAVPVLNLNLQHNKIFVNQDSNSGKWLLTRRIFLVDAVSGRENDLGTQPRVIRVATQISLSVHLVPNTINGNIYPPLITIAYSDIDIKDANSQSVKVSFSVTYEMDHGEAHVQTDIALGVLGGLAVLASLLKTAGWKRRIGSPMIDLQTVVKFLVYYAGDLANVFFIITVGTGLYWLIFFKAQKSVSVLLPMPIQEERFVTYVGCAFALKALQFLHKLISQITIDVFFIDWERPKGKVLKAVEGEGGVRSATVPVSIWRTYFVANEWNEIQTVRKINSLFQVLTVLFFLEVVGFKNLALMDSSSSLSRNPPSYIAPYSCILRYAVSAALWLAIGIIQVVFFAVFYERFIEDKIRQFVDLCSMSNISVFLLSHKCFGYYIHGRSVHGHADTNMEEMNMNLKREAENLCSQRGLVPNTDGQTFEIAISNQMRQHYDRIHETLIRKNGPARLLSSSASTFEQSIKAYHMMNKFLGSFIDHVHKEMDYFIKDKLLLERILGMEFMEPMEKSIFYNDEGYSFSSVLYYGNEATLLIFDLLFFCVVDLACQNFILASFLTYLQQEIFRYIRNTVGQKNLASKTLVDQRFLI</sequence>
<feature type="signal peptide" evidence="2">
    <location>
        <begin position="1"/>
        <end position="36"/>
    </location>
</feature>
<feature type="chain" id="PRO_0000225689" description="Meckelin">
    <location>
        <begin position="37"/>
        <end position="995"/>
    </location>
</feature>
<feature type="topological domain" description="Extracellular" evidence="27">
    <location>
        <begin position="37"/>
        <end position="519"/>
    </location>
</feature>
<feature type="transmembrane region" description="Helical; Name=1" evidence="27">
    <location>
        <begin position="520"/>
        <end position="548"/>
    </location>
</feature>
<feature type="topological domain" description="Cytoplasmic" evidence="27">
    <location>
        <begin position="549"/>
        <end position="558"/>
    </location>
</feature>
<feature type="transmembrane region" description="Helical; Name=2" evidence="27">
    <location>
        <begin position="559"/>
        <end position="590"/>
    </location>
</feature>
<feature type="topological domain" description="Extracellular" evidence="27">
    <location>
        <begin position="591"/>
        <end position="603"/>
    </location>
</feature>
<feature type="transmembrane region" description="Helical; Name=3" evidence="27">
    <location>
        <begin position="604"/>
        <end position="631"/>
    </location>
</feature>
<feature type="topological domain" description="Cytoplasmic" evidence="27">
    <location>
        <begin position="632"/>
        <end position="670"/>
    </location>
</feature>
<feature type="transmembrane region" description="Discontinuously helical; Name=4" evidence="27">
    <location>
        <begin position="671"/>
        <end position="701"/>
    </location>
</feature>
<feature type="intramembrane region" description="Helical; Name=4A" evidence="27">
    <location>
        <begin position="671"/>
        <end position="679"/>
    </location>
</feature>
<feature type="intramembrane region" evidence="27">
    <location>
        <begin position="680"/>
        <end position="688"/>
    </location>
</feature>
<feature type="intramembrane region" description="Helical; Name=4B" evidence="27">
    <location>
        <begin position="689"/>
        <end position="701"/>
    </location>
</feature>
<feature type="topological domain" description="Extracellular" evidence="27">
    <location>
        <begin position="702"/>
        <end position="731"/>
    </location>
</feature>
<feature type="transmembrane region" description="Discontinuously helical; Name=5" evidence="27">
    <location>
        <begin position="732"/>
        <end position="771"/>
    </location>
</feature>
<feature type="intramembrane region" description="Helical; Name=5A" evidence="27">
    <location>
        <begin position="732"/>
        <end position="757"/>
    </location>
</feature>
<feature type="intramembrane region" evidence="27">
    <location>
        <begin position="758"/>
        <end position="762"/>
    </location>
</feature>
<feature type="intramembrane region" description="Helical; Name=5B" evidence="27">
    <location>
        <begin position="763"/>
        <end position="771"/>
    </location>
</feature>
<feature type="topological domain" description="Cytoplasmic" evidence="27">
    <location>
        <begin position="772"/>
        <end position="926"/>
    </location>
</feature>
<feature type="transmembrane region" description="Discontinuously helical; Name=6" evidence="27">
    <location>
        <begin position="927"/>
        <end position="952"/>
    </location>
</feature>
<feature type="intramembrane region" description="Helical; Name=6A" evidence="27">
    <location>
        <begin position="927"/>
        <end position="929"/>
    </location>
</feature>
<feature type="intramembrane region" evidence="27">
    <location>
        <begin position="930"/>
        <end position="936"/>
    </location>
</feature>
<feature type="intramembrane region" description="Helical; Name=6B" evidence="27">
    <location>
        <begin position="937"/>
        <end position="952"/>
    </location>
</feature>
<feature type="topological domain" description="Extracellular" evidence="27">
    <location>
        <begin position="953"/>
        <end position="957"/>
    </location>
</feature>
<feature type="transmembrane region" description="Helical; Name=7" evidence="27">
    <location>
        <begin position="958"/>
        <end position="985"/>
    </location>
</feature>
<feature type="topological domain" description="Cytoplasmic" evidence="27">
    <location>
        <begin position="986"/>
        <end position="995"/>
    </location>
</feature>
<feature type="region of interest" description="Cysteine-rich" evidence="27">
    <location>
        <begin position="37"/>
        <end position="280"/>
    </location>
</feature>
<feature type="coiled-coil region" evidence="27">
    <location>
        <begin position="828"/>
        <end position="917"/>
    </location>
</feature>
<feature type="glycosylation site" description="N-linked (GlcNAc...) asparagine" evidence="27 31">
    <location>
        <position position="141"/>
    </location>
</feature>
<feature type="glycosylation site" description="N-linked (GlcNAc...) asparagine" evidence="27 31">
    <location>
        <position position="179"/>
    </location>
</feature>
<feature type="glycosylation site" description="N-linked (GlcNAc...) asparagine" evidence="27 31">
    <location>
        <position position="242"/>
    </location>
</feature>
<feature type="glycosylation site" description="N-linked (GlcNAc...) asparagine" evidence="27 31">
    <location>
        <position position="318"/>
    </location>
</feature>
<feature type="disulfide bond" evidence="27 31">
    <location>
        <begin position="49"/>
        <end position="62"/>
    </location>
</feature>
<feature type="disulfide bond" evidence="27 31">
    <location>
        <begin position="65"/>
        <end position="78"/>
    </location>
</feature>
<feature type="disulfide bond" evidence="27 31">
    <location>
        <begin position="80"/>
        <end position="97"/>
    </location>
</feature>
<feature type="disulfide bond" evidence="27 31">
    <location>
        <begin position="100"/>
        <end position="114"/>
    </location>
</feature>
<feature type="disulfide bond" evidence="27 31">
    <location>
        <begin position="117"/>
        <end position="127"/>
    </location>
</feature>
<feature type="disulfide bond" evidence="27 31">
    <location>
        <begin position="129"/>
        <end position="150"/>
    </location>
</feature>
<feature type="disulfide bond" evidence="27 31">
    <location>
        <begin position="153"/>
        <end position="170"/>
    </location>
</feature>
<feature type="disulfide bond" evidence="27 31">
    <location>
        <begin position="173"/>
        <end position="184"/>
    </location>
</feature>
<feature type="disulfide bond" evidence="27 31">
    <location>
        <begin position="186"/>
        <end position="197"/>
    </location>
</feature>
<feature type="disulfide bond" evidence="27 31">
    <location>
        <begin position="237"/>
        <end position="246"/>
    </location>
</feature>
<feature type="disulfide bond" evidence="27 31">
    <location>
        <begin position="253"/>
        <end position="268"/>
    </location>
</feature>
<feature type="disulfide bond" evidence="27 31">
    <location>
        <begin position="357"/>
        <end position="378"/>
    </location>
</feature>
<feature type="sequence variant" id="VAR_081741" description="In JBTS6." evidence="12">
    <location>
        <begin position="44"/>
        <end position="995"/>
    </location>
</feature>
<feature type="sequence variant" id="VAR_062310" description="In MKS3; uncertain significance; dbSNP:rs386834188." evidence="11">
    <original>Y</original>
    <variation>C</variation>
    <location>
        <position position="54"/>
    </location>
</feature>
<feature type="sequence variant" id="VAR_063783" description="In JBTS6; uncertain significance; dbSNP:rs772437766." evidence="14">
    <original>P</original>
    <variation>R</variation>
    <location>
        <position position="82"/>
    </location>
</feature>
<feature type="sequence variant" id="VAR_063784" description="In JBTS6; uncertain significance; dbSNP:rs762543032." evidence="14">
    <original>P</original>
    <variation>S</variation>
    <location>
        <position position="82"/>
    </location>
</feature>
<feature type="sequence variant" id="VAR_076871" description="Found in Joubert syndrome-related disorder; likely pathogenic." evidence="17">
    <original>N</original>
    <variation>K</variation>
    <location>
        <position position="90"/>
    </location>
</feature>
<feature type="sequence variant" id="VAR_063785" description="In COACH1; uncertain significance; dbSNP:rs797046045." evidence="14">
    <original>K</original>
    <variation>N</variation>
    <location>
        <position position="99"/>
    </location>
</feature>
<feature type="sequence variant" id="VAR_076872" description="Found in Joubert syndrome-related disorder; likely pathogenic; dbSNP:rs375824494." evidence="17">
    <original>E</original>
    <variation>K</variation>
    <location>
        <position position="124"/>
    </location>
</feature>
<feature type="sequence variant" id="VAR_063786" description="In COACH1; dbSNP:rs863225226." evidence="10 14">
    <original>P</original>
    <variation>R</variation>
    <location>
        <position position="130"/>
    </location>
</feature>
<feature type="sequence variant" id="VAR_079632" description="In COACH1; does not affect protein abundance; fails to rescue the hydrocephalus phenotype in a zebrafish model; dbSNP:rs1490496033." evidence="23">
    <original>G</original>
    <variation>A</variation>
    <location>
        <position position="132"/>
    </location>
</feature>
<feature type="sequence variant" id="VAR_063787" description="In COACH1; uncertain significance; dbSNP:rs750950408." evidence="14">
    <original>R</original>
    <variation>Q</variation>
    <location>
        <position position="172"/>
    </location>
</feature>
<feature type="sequence variant" id="VAR_081742" description="In JBTS6, MKS3 and RHYNS." evidence="7 12 24">
    <location>
        <begin position="208"/>
        <end position="995"/>
    </location>
</feature>
<feature type="sequence variant" id="VAR_062311" description="In dbSNP:rs202036490." evidence="9">
    <original>G</original>
    <variation>A</variation>
    <location>
        <position position="218"/>
    </location>
</feature>
<feature type="sequence variant" id="VAR_063788" description="In COACH1 and JBTS6." evidence="14 26">
    <original>N</original>
    <variation>S</variation>
    <location>
        <position position="242"/>
    </location>
</feature>
<feature type="sequence variant" id="VAR_062312" description="In MKS3; uncertain significance; dbSNP:rs386834206." evidence="11">
    <original>S</original>
    <variation>F</variation>
    <location>
        <position position="245"/>
    </location>
</feature>
<feature type="sequence variant" id="VAR_062313" description="In MKS3, JBTS6 and COACH1; loss of interaction with WNT5A; dbSNP:rs202149403." evidence="7 11 12 14 20">
    <original>M</original>
    <variation>T</variation>
    <location>
        <position position="252"/>
    </location>
</feature>
<feature type="sequence variant" id="VAR_063789" description="In COACH1; uncertain significance; dbSNP:rs863225227." evidence="14">
    <original>M</original>
    <variation>V</variation>
    <location>
        <position position="257"/>
    </location>
</feature>
<feature type="sequence variant" id="VAR_062314" description="In dbSNP:rs35793208." evidence="9">
    <original>D</original>
    <variation>N</variation>
    <location>
        <position position="261"/>
    </location>
</feature>
<feature type="sequence variant" id="VAR_064185" description="In NPHP11; dbSNP:rs267607117." evidence="12">
    <original>W</original>
    <variation>L</variation>
    <location>
        <position position="290"/>
    </location>
</feature>
<feature type="sequence variant" id="VAR_062315" description="In MKS3; uncertain significance; dbSNP:rs386834208." evidence="11">
    <original>W</original>
    <variation>C</variation>
    <location>
        <position position="296"/>
    </location>
</feature>
<feature type="sequence variant" id="VAR_076873" description="Found in Joubert syndrome-related disorder; likely pathogenic; dbSNP:rs756906837." evidence="17">
    <original>D</original>
    <variation>E</variation>
    <location>
        <position position="301"/>
    </location>
</feature>
<feature type="sequence variant" id="VAR_062316" description="Is a modifier of Bardet-Biedl syndrome; found in a BBS14 patient also carrying a homozygous truncating mutation of the CEP290 gene; dbSNP:rs111619594." evidence="9">
    <original>S</original>
    <variation>C</variation>
    <location>
        <position position="320"/>
    </location>
</feature>
<feature type="sequence variant" id="VAR_063790" description="In COACH1 and MKS3; loss of interaction with WNT5A; dbSNP:rs386834180." evidence="14 17 20">
    <original>L</original>
    <variation>S</variation>
    <location>
        <position position="349"/>
    </location>
</feature>
<feature type="sequence variant" id="VAR_063791" description="In COACH1 and JBTS6; found in a patient with Joubert syndrome that also carries mutation 1329-R--S-1332 Del in KIF7; dbSNP:rs863225232." evidence="14 18">
    <original>P</original>
    <variation>L</variation>
    <location>
        <position position="358"/>
    </location>
</feature>
<feature type="sequence variant" id="VAR_087308" description="Does not affect Wnt signaling regulation; when expressed in TMEM67-null cells it induces ROR2 phosphorylation upon stimulation by WNT5A." evidence="28">
    <original>D</original>
    <variation>E</variation>
    <location>
        <position position="359"/>
    </location>
</feature>
<feature type="sequence variant" id="VAR_063792" description="In COACH1; dbSNP:rs863225235." evidence="10 14">
    <original>T</original>
    <variation>K</variation>
    <location>
        <position position="372"/>
    </location>
</feature>
<feature type="sequence variant" id="VAR_063793" description="In COACH1; dbSNP:rs863225231." evidence="14">
    <original>Q</original>
    <variation>E</variation>
    <location>
        <position position="376"/>
    </location>
</feature>
<feature type="sequence variant" id="VAR_025474" description="In MKS3; leads to endoplasmic reticulum retention and prevents localization at the cell membrane; decreased function in non-canonical Wnt signaling activation; when expressed in TMEM67-null cells does not induce ROR2 phosphorylation upon stimulation by WNT5A; loss of interaction with WNT5A; dbSNP:rs137853106." evidence="4 6 20 28">
    <original>Q</original>
    <variation>P</variation>
    <location>
        <position position="376"/>
    </location>
</feature>
<feature type="sequence variant" id="VAR_081743" description="In RHYNS; may result in exon 13 skipping." evidence="24">
    <original>D</original>
    <variation>G</variation>
    <location>
        <position position="430"/>
    </location>
</feature>
<feature type="sequence variant" id="VAR_062317" description="In dbSNP:rs35765535." evidence="9">
    <original>L</original>
    <variation>V</variation>
    <location>
        <position position="437"/>
    </location>
</feature>
<feature type="sequence variant" id="VAR_062318" description="In MKS3 and COACH1; loss of interaction with WNT5A; affects Wnt signaling regulation; when expressed in TMEM67-null cells does not rescue increased canonical Wnt signaling; dbSNP:rs386834182." evidence="7 10 11 20">
    <original>R</original>
    <variation>Q</variation>
    <location>
        <position position="440"/>
    </location>
</feature>
<feature type="sequence variant" id="VAR_063794" description="In COACH1; uncertain significance; dbSNP:rs752362727." evidence="14">
    <original>R</original>
    <variation>C</variation>
    <location>
        <position position="441"/>
    </location>
</feature>
<feature type="sequence variant" id="VAR_076874" description="In MKS3; dbSNP:rs386834183." evidence="17">
    <original>R</original>
    <variation>L</variation>
    <location>
        <position position="441"/>
    </location>
</feature>
<feature type="sequence variant" id="VAR_081744" description="In MKS3." evidence="7">
    <location>
        <begin position="451"/>
        <end position="995"/>
    </location>
</feature>
<feature type="sequence variant" id="VAR_063795" description="In COACH1; uncertain significance; dbSNP:rs863225228." evidence="14">
    <original>P</original>
    <variation>S</variation>
    <location>
        <position position="485"/>
    </location>
</feature>
<feature type="sequence variant" id="VAR_031987" description="In JBTS6, MKS3 and COACH1; dbSNP:rs137853107." evidence="5 11 14">
    <original>Y</original>
    <variation>C</variation>
    <location>
        <position position="513"/>
    </location>
</feature>
<feature type="sequence variant" id="VAR_031988" description="In JBTS6; dbSNP:rs267607114." evidence="5">
    <original>G</original>
    <variation>E</variation>
    <location>
        <position position="545"/>
    </location>
</feature>
<feature type="sequence variant" id="VAR_087309" description="In MKS3; affects Wnt signaling regulation; when expressed in TMEM67-null cells does not rescue increased canonical Wnt signaling." evidence="20 21">
    <original>R</original>
    <variation>C</variation>
    <location>
        <position position="549"/>
    </location>
</feature>
<feature type="sequence variant" id="VAR_076875" description="Found in Joubert syndrome-related disorder; likely pathogenic; dbSNP:rs1017800436." evidence="17">
    <original>G</original>
    <variation>D</variation>
    <location>
        <position position="569"/>
    </location>
</feature>
<feature type="sequence variant" id="VAR_063796" description="In COACH1; dbSNP:rs267607115." evidence="10">
    <original>F</original>
    <variation>S</variation>
    <location>
        <position position="590"/>
    </location>
</feature>
<feature type="sequence variant" id="VAR_025475" description="In dbSNP:rs3134031." evidence="3 8">
    <original>I</original>
    <variation>V</variation>
    <location>
        <position position="604"/>
    </location>
</feature>
<feature type="sequence variant" id="VAR_062319" description="In MKS3, COACH1 and NPHP11; affects Wnt signaling regulation; when expressed in TMEM67-null cells does not rescue increased canonical Wnt signaling; dbSNP:rs201893408." evidence="11 12 14 20">
    <original>C</original>
    <variation>R</variation>
    <location>
        <position position="615"/>
    </location>
</feature>
<feature type="sequence variant" id="VAR_076876" description="Found in Joubert syndrome-related disorder; likely pathogenic; dbSNP:rs757204749." evidence="17">
    <original>A</original>
    <variation>V</variation>
    <location>
        <position position="616"/>
    </location>
</feature>
<feature type="sequence variant" id="VAR_063797" description="In COACH1; uncertain significance; dbSNP:rs863225225." evidence="14">
    <original>F</original>
    <variation>L</variation>
    <location>
        <position position="637"/>
    </location>
</feature>
<feature type="sequence variant" id="VAR_076877" description="In MKS3; dbSNP:rs386834189." evidence="17">
    <original>W</original>
    <variation>R</variation>
    <location>
        <position position="668"/>
    </location>
</feature>
<feature type="sequence variant" id="VAR_075699" description="In JBTS6; dbSNP:rs781383498." evidence="22">
    <original>D</original>
    <variation>A</variation>
    <location>
        <position position="711"/>
    </location>
</feature>
<feature type="sequence variant" id="VAR_063798" description="In COACH1." evidence="10">
    <original>S</original>
    <variation>G</variation>
    <location>
        <position position="728"/>
    </location>
</feature>
<feature type="sequence variant" id="VAR_076878" description="Found in Joubert syndrome-related disorder; likely pathogenic." evidence="17">
    <original>L</original>
    <variation>R</variation>
    <location>
        <position position="739"/>
    </location>
</feature>
<feature type="sequence variant" id="VAR_063799" description="In COACH1; decreased function in non-canonical Wnt signaling activation; when expressed in TMEM67-null cells does not induce ROR2 phosphorylation upon stimulation by WNT5A; dbSNP:rs777137476." evidence="10 28">
    <original>H</original>
    <variation>R</variation>
    <location>
        <position position="782"/>
    </location>
</feature>
<feature type="sequence variant" id="VAR_087310" description="In MKS3." evidence="25">
    <original>G</original>
    <variation>A</variation>
    <location>
        <position position="786"/>
    </location>
</feature>
<feature type="sequence variant" id="VAR_076879" description="In MKS3; decreased function in non-canonical Wnt signaling activation; when expressed in TMEM67-null cells does not induce ROR2 phosphorylation upon stimulation by WNT5A; dbSNP:rs386834193." evidence="17 28">
    <original>G</original>
    <variation>E</variation>
    <location>
        <position position="786"/>
    </location>
</feature>
<feature type="sequence variant" id="VAR_063800" description="In COACH1." evidence="10">
    <original>R</original>
    <variation>S</variation>
    <location>
        <position position="820"/>
    </location>
</feature>
<feature type="sequence variant" id="VAR_064186" description="In NPHP11; dbSNP:rs267607116." evidence="12">
    <original>G</original>
    <variation>R</variation>
    <location>
        <position position="821"/>
    </location>
</feature>
<feature type="sequence variant" id="VAR_064187" description="In NPHP11; dbSNP:rs267607116." evidence="12">
    <original>G</original>
    <variation>S</variation>
    <location>
        <position position="821"/>
    </location>
</feature>
<feature type="sequence variant" id="VAR_063801" description="In COACH1 and JBTS6; found in a patient with Joubert syndrome that also carries mutation 1329-R--S-1332 Del in KIF7; dbSNP:rs267607119." evidence="10 12 14 18">
    <original>I</original>
    <variation>T</variation>
    <location>
        <position position="833"/>
    </location>
</feature>
<feature type="sequence variant" id="VAR_063802" description="In COACH1; uncertain significance; dbSNP:rs863225234." evidence="14">
    <original>Q</original>
    <variation>P</variation>
    <location>
        <position position="841"/>
    </location>
</feature>
<feature type="sequence variant" id="VAR_076880" description="In MKS3; dbSNP:rs386834194." evidence="17">
    <original>Y</original>
    <variation>C</variation>
    <location>
        <position position="843"/>
    </location>
</feature>
<feature type="sequence variant" id="VAR_063803" description="In COACH1; uncertain significance; dbSNP:rs863225233." evidence="14">
    <original>F</original>
    <variation>C</variation>
    <location>
        <position position="942"/>
    </location>
</feature>
<feature type="sequence variant" id="VAR_062320" description="In MKS3; dbSNP:rs386834199." evidence="7 11">
    <original>L</original>
    <variation>P</variation>
    <location>
        <position position="966"/>
    </location>
</feature>
<feature type="mutagenesis site" description="Decreased function in non-canonical Wnt signaling activation. When expressed in TMEM67-null cells does not induce ROR2 phosphorylation upon stimulation by WNT5A." evidence="28">
    <original>C</original>
    <variation>Y</variation>
    <location>
        <position position="170"/>
    </location>
</feature>
<feature type="mutagenesis site" description="Does not affect function in non-canonical Wnt signaling activation. When expressed in TMEM67-null cells it induces ROR2 phosphorylation upon stimulation by WNT5A." evidence="28">
    <original>T</original>
    <variation>I</variation>
    <location>
        <position position="176"/>
    </location>
</feature>
<feature type="mutagenesis site" description="Decreased function in non-canonical Wnt signaling activation. When expressed in TMEM67-null cells does not induce ROR2 phosphorylation upon stimulation by WNT5A." evidence="28">
    <original>H</original>
    <variation>R</variation>
    <location>
        <position position="790"/>
    </location>
</feature>
<feature type="mutagenesis site" description="Does not affect function in non-canonical Wnt signaling activation. When expressed in TMEM67-null cells it induces ROR2 phosphorylation upon stimulation by WNT5A." evidence="28">
    <original>G</original>
    <variation>R</variation>
    <location>
        <position position="979"/>
    </location>
</feature>
<feature type="sequence conflict" description="In Ref. 4; BAG52507." evidence="30" ref="4">
    <original>N</original>
    <variation>S</variation>
    <location>
        <position position="251"/>
    </location>
</feature>
<feature type="sequence conflict" description="In Ref. 4; BAG52507." evidence="30" ref="4">
    <original>N</original>
    <variation>D</variation>
    <location>
        <position position="325"/>
    </location>
</feature>
<feature type="strand" evidence="32">
    <location>
        <begin position="40"/>
        <end position="42"/>
    </location>
</feature>
<feature type="helix" evidence="32">
    <location>
        <begin position="46"/>
        <end position="48"/>
    </location>
</feature>
<feature type="strand" evidence="32">
    <location>
        <begin position="53"/>
        <end position="55"/>
    </location>
</feature>
<feature type="strand" evidence="32">
    <location>
        <begin position="57"/>
        <end position="59"/>
    </location>
</feature>
<feature type="strand" evidence="32">
    <location>
        <begin position="61"/>
        <end position="64"/>
    </location>
</feature>
<feature type="strand" evidence="32">
    <location>
        <begin position="67"/>
        <end position="71"/>
    </location>
</feature>
<feature type="strand" evidence="32">
    <location>
        <begin position="73"/>
        <end position="80"/>
    </location>
</feature>
<feature type="strand" evidence="32">
    <location>
        <begin position="84"/>
        <end position="88"/>
    </location>
</feature>
<feature type="strand" evidence="32">
    <location>
        <begin position="91"/>
        <end position="93"/>
    </location>
</feature>
<feature type="strand" evidence="32">
    <location>
        <begin position="96"/>
        <end position="99"/>
    </location>
</feature>
<feature type="strand" evidence="32">
    <location>
        <begin position="133"/>
        <end position="135"/>
    </location>
</feature>
<feature type="strand" evidence="32">
    <location>
        <begin position="140"/>
        <end position="142"/>
    </location>
</feature>
<feature type="strand" evidence="32">
    <location>
        <begin position="150"/>
        <end position="152"/>
    </location>
</feature>
<feature type="strand" evidence="32">
    <location>
        <begin position="156"/>
        <end position="159"/>
    </location>
</feature>
<feature type="strand" evidence="32">
    <location>
        <begin position="165"/>
        <end position="171"/>
    </location>
</feature>
<feature type="helix" evidence="32">
    <location>
        <begin position="175"/>
        <end position="180"/>
    </location>
</feature>
<feature type="strand" evidence="32">
    <location>
        <begin position="181"/>
        <end position="184"/>
    </location>
</feature>
<feature type="strand" evidence="32">
    <location>
        <begin position="190"/>
        <end position="193"/>
    </location>
</feature>
<feature type="strand" evidence="32">
    <location>
        <begin position="196"/>
        <end position="198"/>
    </location>
</feature>
<feature type="strand" evidence="32">
    <location>
        <begin position="200"/>
        <end position="202"/>
    </location>
</feature>
<feature type="strand" evidence="32">
    <location>
        <begin position="216"/>
        <end position="218"/>
    </location>
</feature>
<feature type="helix" evidence="32">
    <location>
        <begin position="224"/>
        <end position="229"/>
    </location>
</feature>
<feature type="helix" evidence="32">
    <location>
        <begin position="231"/>
        <end position="238"/>
    </location>
</feature>
<feature type="helix" evidence="32">
    <location>
        <begin position="243"/>
        <end position="255"/>
    </location>
</feature>
<feature type="strand" evidence="32">
    <location>
        <begin position="262"/>
        <end position="264"/>
    </location>
</feature>
<feature type="helix" evidence="32">
    <location>
        <begin position="267"/>
        <end position="277"/>
    </location>
</feature>
<feature type="strand" evidence="32">
    <location>
        <begin position="284"/>
        <end position="286"/>
    </location>
</feature>
<feature type="strand" evidence="32">
    <location>
        <begin position="292"/>
        <end position="294"/>
    </location>
</feature>
<feature type="strand" evidence="32">
    <location>
        <begin position="301"/>
        <end position="303"/>
    </location>
</feature>
<feature type="helix" evidence="32">
    <location>
        <begin position="307"/>
        <end position="310"/>
    </location>
</feature>
<feature type="strand" evidence="32">
    <location>
        <begin position="321"/>
        <end position="324"/>
    </location>
</feature>
<feature type="strand" evidence="32">
    <location>
        <begin position="332"/>
        <end position="337"/>
    </location>
</feature>
<feature type="turn" evidence="32">
    <location>
        <begin position="350"/>
        <end position="352"/>
    </location>
</feature>
<feature type="helix" evidence="32">
    <location>
        <begin position="361"/>
        <end position="365"/>
    </location>
</feature>
<feature type="strand" evidence="32">
    <location>
        <begin position="375"/>
        <end position="377"/>
    </location>
</feature>
<feature type="helix" evidence="32">
    <location>
        <begin position="382"/>
        <end position="388"/>
    </location>
</feature>
<feature type="strand" evidence="32">
    <location>
        <begin position="394"/>
        <end position="402"/>
    </location>
</feature>
<feature type="strand" evidence="32">
    <location>
        <begin position="408"/>
        <end position="412"/>
    </location>
</feature>
<feature type="strand" evidence="32">
    <location>
        <begin position="421"/>
        <end position="426"/>
    </location>
</feature>
<feature type="strand" evidence="32">
    <location>
        <begin position="428"/>
        <end position="431"/>
    </location>
</feature>
<feature type="strand" evidence="32">
    <location>
        <begin position="444"/>
        <end position="446"/>
    </location>
</feature>
<feature type="strand" evidence="32">
    <location>
        <begin position="459"/>
        <end position="461"/>
    </location>
</feature>
<feature type="strand" evidence="32">
    <location>
        <begin position="463"/>
        <end position="467"/>
    </location>
</feature>
<feature type="strand" evidence="32">
    <location>
        <begin position="470"/>
        <end position="474"/>
    </location>
</feature>
<feature type="strand" evidence="32">
    <location>
        <begin position="491"/>
        <end position="493"/>
    </location>
</feature>
<feature type="strand" evidence="32">
    <location>
        <begin position="498"/>
        <end position="502"/>
    </location>
</feature>
<feature type="strand" evidence="32">
    <location>
        <begin position="508"/>
        <end position="514"/>
    </location>
</feature>
<feature type="helix" evidence="32">
    <location>
        <begin position="519"/>
        <end position="548"/>
    </location>
</feature>
<feature type="helix" evidence="32">
    <location>
        <begin position="558"/>
        <end position="591"/>
    </location>
</feature>
<feature type="helix" evidence="32">
    <location>
        <begin position="603"/>
        <end position="632"/>
    </location>
</feature>
<feature type="strand" evidence="32">
    <location>
        <begin position="635"/>
        <end position="641"/>
    </location>
</feature>
<feature type="helix" evidence="32">
    <location>
        <begin position="667"/>
        <end position="679"/>
    </location>
</feature>
<feature type="helix" evidence="32">
    <location>
        <begin position="688"/>
        <end position="700"/>
    </location>
</feature>
<feature type="helix" evidence="32">
    <location>
        <begin position="704"/>
        <end position="708"/>
    </location>
</feature>
<feature type="strand" evidence="32">
    <location>
        <begin position="709"/>
        <end position="712"/>
    </location>
</feature>
<feature type="turn" evidence="32">
    <location>
        <begin position="729"/>
        <end position="731"/>
    </location>
</feature>
<feature type="helix" evidence="32">
    <location>
        <begin position="732"/>
        <end position="757"/>
    </location>
</feature>
<feature type="helix" evidence="32">
    <location>
        <begin position="762"/>
        <end position="771"/>
    </location>
</feature>
<feature type="turn" evidence="32">
    <location>
        <begin position="772"/>
        <end position="774"/>
    </location>
</feature>
<feature type="strand" evidence="32">
    <location>
        <begin position="776"/>
        <end position="786"/>
    </location>
</feature>
<feature type="strand" evidence="32">
    <location>
        <begin position="831"/>
        <end position="834"/>
    </location>
</feature>
<feature type="helix" evidence="32">
    <location>
        <begin position="837"/>
        <end position="844"/>
    </location>
</feature>
<feature type="helix" evidence="32">
    <location>
        <begin position="869"/>
        <end position="885"/>
    </location>
</feature>
<feature type="strand" evidence="32">
    <location>
        <begin position="896"/>
        <end position="898"/>
    </location>
</feature>
<feature type="helix" evidence="32">
    <location>
        <begin position="903"/>
        <end position="906"/>
    </location>
</feature>
<feature type="strand" evidence="32">
    <location>
        <begin position="914"/>
        <end position="916"/>
    </location>
</feature>
<feature type="strand" evidence="32">
    <location>
        <begin position="919"/>
        <end position="921"/>
    </location>
</feature>
<feature type="turn" evidence="32">
    <location>
        <begin position="923"/>
        <end position="925"/>
    </location>
</feature>
<feature type="helix" evidence="32">
    <location>
        <begin position="926"/>
        <end position="929"/>
    </location>
</feature>
<feature type="turn" evidence="32">
    <location>
        <begin position="930"/>
        <end position="932"/>
    </location>
</feature>
<feature type="helix" evidence="32">
    <location>
        <begin position="936"/>
        <end position="945"/>
    </location>
</feature>
<feature type="helix" evidence="32">
    <location>
        <begin position="947"/>
        <end position="953"/>
    </location>
</feature>
<feature type="helix" evidence="32">
    <location>
        <begin position="958"/>
        <end position="986"/>
    </location>
</feature>
<reference key="1">
    <citation type="journal article" date="2007" name="BMC Genomics">
        <title>The full-ORF clone resource of the German cDNA consortium.</title>
        <authorList>
            <person name="Bechtel S."/>
            <person name="Rosenfelder H."/>
            <person name="Duda A."/>
            <person name="Schmidt C.P."/>
            <person name="Ernst U."/>
            <person name="Wellenreuther R."/>
            <person name="Mehrle A."/>
            <person name="Schuster C."/>
            <person name="Bahr A."/>
            <person name="Bloecker H."/>
            <person name="Heubner D."/>
            <person name="Hoerlein A."/>
            <person name="Michel G."/>
            <person name="Wedler H."/>
            <person name="Koehrer K."/>
            <person name="Ottenwaelder B."/>
            <person name="Poustka A."/>
            <person name="Wiemann S."/>
            <person name="Schupp I."/>
        </authorList>
    </citation>
    <scope>NUCLEOTIDE SEQUENCE [LARGE SCALE MRNA]</scope>
    <scope>VARIANT VAL-604</scope>
    <source>
        <tissue>Testis</tissue>
    </source>
</reference>
<reference key="2">
    <citation type="journal article" date="2006" name="Nature">
        <title>DNA sequence and analysis of human chromosome 8.</title>
        <authorList>
            <person name="Nusbaum C."/>
            <person name="Mikkelsen T.S."/>
            <person name="Zody M.C."/>
            <person name="Asakawa S."/>
            <person name="Taudien S."/>
            <person name="Garber M."/>
            <person name="Kodira C.D."/>
            <person name="Schueler M.G."/>
            <person name="Shimizu A."/>
            <person name="Whittaker C.A."/>
            <person name="Chang J.L."/>
            <person name="Cuomo C.A."/>
            <person name="Dewar K."/>
            <person name="FitzGerald M.G."/>
            <person name="Yang X."/>
            <person name="Allen N.R."/>
            <person name="Anderson S."/>
            <person name="Asakawa T."/>
            <person name="Blechschmidt K."/>
            <person name="Bloom T."/>
            <person name="Borowsky M.L."/>
            <person name="Butler J."/>
            <person name="Cook A."/>
            <person name="Corum B."/>
            <person name="DeArellano K."/>
            <person name="DeCaprio D."/>
            <person name="Dooley K.T."/>
            <person name="Dorris L. III"/>
            <person name="Engels R."/>
            <person name="Gloeckner G."/>
            <person name="Hafez N."/>
            <person name="Hagopian D.S."/>
            <person name="Hall J.L."/>
            <person name="Ishikawa S.K."/>
            <person name="Jaffe D.B."/>
            <person name="Kamat A."/>
            <person name="Kudoh J."/>
            <person name="Lehmann R."/>
            <person name="Lokitsang T."/>
            <person name="Macdonald P."/>
            <person name="Major J.E."/>
            <person name="Matthews C.D."/>
            <person name="Mauceli E."/>
            <person name="Menzel U."/>
            <person name="Mihalev A.H."/>
            <person name="Minoshima S."/>
            <person name="Murayama Y."/>
            <person name="Naylor J.W."/>
            <person name="Nicol R."/>
            <person name="Nguyen C."/>
            <person name="O'Leary S.B."/>
            <person name="O'Neill K."/>
            <person name="Parker S.C.J."/>
            <person name="Polley A."/>
            <person name="Raymond C.K."/>
            <person name="Reichwald K."/>
            <person name="Rodriguez J."/>
            <person name="Sasaki T."/>
            <person name="Schilhabel M."/>
            <person name="Siddiqui R."/>
            <person name="Smith C.L."/>
            <person name="Sneddon T.P."/>
            <person name="Talamas J.A."/>
            <person name="Tenzin P."/>
            <person name="Topham K."/>
            <person name="Venkataraman V."/>
            <person name="Wen G."/>
            <person name="Yamazaki S."/>
            <person name="Young S.K."/>
            <person name="Zeng Q."/>
            <person name="Zimmer A.R."/>
            <person name="Rosenthal A."/>
            <person name="Birren B.W."/>
            <person name="Platzer M."/>
            <person name="Shimizu N."/>
            <person name="Lander E.S."/>
        </authorList>
    </citation>
    <scope>NUCLEOTIDE SEQUENCE [LARGE SCALE GENOMIC DNA]</scope>
</reference>
<reference key="3">
    <citation type="submission" date="2005-07" db="EMBL/GenBank/DDBJ databases">
        <authorList>
            <person name="Mural R.J."/>
            <person name="Istrail S."/>
            <person name="Sutton G."/>
            <person name="Florea L."/>
            <person name="Halpern A.L."/>
            <person name="Mobarry C.M."/>
            <person name="Lippert R."/>
            <person name="Walenz B."/>
            <person name="Shatkay H."/>
            <person name="Dew I."/>
            <person name="Miller J.R."/>
            <person name="Flanigan M.J."/>
            <person name="Edwards N.J."/>
            <person name="Bolanos R."/>
            <person name="Fasulo D."/>
            <person name="Halldorsson B.V."/>
            <person name="Hannenhalli S."/>
            <person name="Turner R."/>
            <person name="Yooseph S."/>
            <person name="Lu F."/>
            <person name="Nusskern D.R."/>
            <person name="Shue B.C."/>
            <person name="Zheng X.H."/>
            <person name="Zhong F."/>
            <person name="Delcher A.L."/>
            <person name="Huson D.H."/>
            <person name="Kravitz S.A."/>
            <person name="Mouchard L."/>
            <person name="Reinert K."/>
            <person name="Remington K.A."/>
            <person name="Clark A.G."/>
            <person name="Waterman M.S."/>
            <person name="Eichler E.E."/>
            <person name="Adams M.D."/>
            <person name="Hunkapiller M.W."/>
            <person name="Myers E.W."/>
            <person name="Venter J.C."/>
        </authorList>
    </citation>
    <scope>NUCLEOTIDE SEQUENCE [LARGE SCALE GENOMIC DNA]</scope>
</reference>
<reference key="4">
    <citation type="journal article" date="2004" name="Nat. Genet.">
        <title>Complete sequencing and characterization of 21,243 full-length human cDNAs.</title>
        <authorList>
            <person name="Ota T."/>
            <person name="Suzuki Y."/>
            <person name="Nishikawa T."/>
            <person name="Otsuki T."/>
            <person name="Sugiyama T."/>
            <person name="Irie R."/>
            <person name="Wakamatsu A."/>
            <person name="Hayashi K."/>
            <person name="Sato H."/>
            <person name="Nagai K."/>
            <person name="Kimura K."/>
            <person name="Makita H."/>
            <person name="Sekine M."/>
            <person name="Obayashi M."/>
            <person name="Nishi T."/>
            <person name="Shibahara T."/>
            <person name="Tanaka T."/>
            <person name="Ishii S."/>
            <person name="Yamamoto J."/>
            <person name="Saito K."/>
            <person name="Kawai Y."/>
            <person name="Isono Y."/>
            <person name="Nakamura Y."/>
            <person name="Nagahari K."/>
            <person name="Murakami K."/>
            <person name="Yasuda T."/>
            <person name="Iwayanagi T."/>
            <person name="Wagatsuma M."/>
            <person name="Shiratori A."/>
            <person name="Sudo H."/>
            <person name="Hosoiri T."/>
            <person name="Kaku Y."/>
            <person name="Kodaira H."/>
            <person name="Kondo H."/>
            <person name="Sugawara M."/>
            <person name="Takahashi M."/>
            <person name="Kanda K."/>
            <person name="Yokoi T."/>
            <person name="Furuya T."/>
            <person name="Kikkawa E."/>
            <person name="Omura Y."/>
            <person name="Abe K."/>
            <person name="Kamihara K."/>
            <person name="Katsuta N."/>
            <person name="Sato K."/>
            <person name="Tanikawa M."/>
            <person name="Yamazaki M."/>
            <person name="Ninomiya K."/>
            <person name="Ishibashi T."/>
            <person name="Yamashita H."/>
            <person name="Murakawa K."/>
            <person name="Fujimori K."/>
            <person name="Tanai H."/>
            <person name="Kimata M."/>
            <person name="Watanabe M."/>
            <person name="Hiraoka S."/>
            <person name="Chiba Y."/>
            <person name="Ishida S."/>
            <person name="Ono Y."/>
            <person name="Takiguchi S."/>
            <person name="Watanabe S."/>
            <person name="Yosida M."/>
            <person name="Hotuta T."/>
            <person name="Kusano J."/>
            <person name="Kanehori K."/>
            <person name="Takahashi-Fujii A."/>
            <person name="Hara H."/>
            <person name="Tanase T.-O."/>
            <person name="Nomura Y."/>
            <person name="Togiya S."/>
            <person name="Komai F."/>
            <person name="Hara R."/>
            <person name="Takeuchi K."/>
            <person name="Arita M."/>
            <person name="Imose N."/>
            <person name="Musashino K."/>
            <person name="Yuuki H."/>
            <person name="Oshima A."/>
            <person name="Sasaki N."/>
            <person name="Aotsuka S."/>
            <person name="Yoshikawa Y."/>
            <person name="Matsunawa H."/>
            <person name="Ichihara T."/>
            <person name="Shiohata N."/>
            <person name="Sano S."/>
            <person name="Moriya S."/>
            <person name="Momiyama H."/>
            <person name="Satoh N."/>
            <person name="Takami S."/>
            <person name="Terashima Y."/>
            <person name="Suzuki O."/>
            <person name="Nakagawa S."/>
            <person name="Senoh A."/>
            <person name="Mizoguchi H."/>
            <person name="Goto Y."/>
            <person name="Shimizu F."/>
            <person name="Wakebe H."/>
            <person name="Hishigaki H."/>
            <person name="Watanabe T."/>
            <person name="Sugiyama A."/>
            <person name="Takemoto M."/>
            <person name="Kawakami B."/>
            <person name="Yamazaki M."/>
            <person name="Watanabe K."/>
            <person name="Kumagai A."/>
            <person name="Itakura S."/>
            <person name="Fukuzumi Y."/>
            <person name="Fujimori Y."/>
            <person name="Komiyama M."/>
            <person name="Tashiro H."/>
            <person name="Tanigami A."/>
            <person name="Fujiwara T."/>
            <person name="Ono T."/>
            <person name="Yamada K."/>
            <person name="Fujii Y."/>
            <person name="Ozaki K."/>
            <person name="Hirao M."/>
            <person name="Ohmori Y."/>
            <person name="Kawabata A."/>
            <person name="Hikiji T."/>
            <person name="Kobatake N."/>
            <person name="Inagaki H."/>
            <person name="Ikema Y."/>
            <person name="Okamoto S."/>
            <person name="Okitani R."/>
            <person name="Kawakami T."/>
            <person name="Noguchi S."/>
            <person name="Itoh T."/>
            <person name="Shigeta K."/>
            <person name="Senba T."/>
            <person name="Matsumura K."/>
            <person name="Nakajima Y."/>
            <person name="Mizuno T."/>
            <person name="Morinaga M."/>
            <person name="Sasaki M."/>
            <person name="Togashi T."/>
            <person name="Oyama M."/>
            <person name="Hata H."/>
            <person name="Watanabe M."/>
            <person name="Komatsu T."/>
            <person name="Mizushima-Sugano J."/>
            <person name="Satoh T."/>
            <person name="Shirai Y."/>
            <person name="Takahashi Y."/>
            <person name="Nakagawa K."/>
            <person name="Okumura K."/>
            <person name="Nagase T."/>
            <person name="Nomura N."/>
            <person name="Kikuchi H."/>
            <person name="Masuho Y."/>
            <person name="Yamashita R."/>
            <person name="Nakai K."/>
            <person name="Yada T."/>
            <person name="Nakamura Y."/>
            <person name="Ohara O."/>
            <person name="Isogai T."/>
            <person name="Sugano S."/>
        </authorList>
    </citation>
    <scope>NUCLEOTIDE SEQUENCE [LARGE SCALE MRNA] OF 3-995</scope>
    <scope>VARIANT VAL-604</scope>
    <source>
        <tissue>Corpus callosum</tissue>
    </source>
</reference>
<reference key="5">
    <citation type="journal article" date="2004" name="Genome Res.">
        <title>The status, quality, and expansion of the NIH full-length cDNA project: the Mammalian Gene Collection (MGC).</title>
        <authorList>
            <consortium name="The MGC Project Team"/>
        </authorList>
    </citation>
    <scope>NUCLEOTIDE SEQUENCE [LARGE SCALE MRNA] OF 5-995</scope>
    <source>
        <tissue>Testis</tissue>
    </source>
</reference>
<reference key="6">
    <citation type="journal article" date="2007" name="Hum. Mol. Genet.">
        <title>The Meckel-Gruber syndrome proteins MKS1 and meckelin interact and are required for primary cilium formation.</title>
        <authorList>
            <person name="Dawe H.R."/>
            <person name="Smith U.M."/>
            <person name="Cullinane A.R."/>
            <person name="Gerrelli D."/>
            <person name="Cox P."/>
            <person name="Badano J.L."/>
            <person name="Blair-Reid S."/>
            <person name="Sriram N."/>
            <person name="Katsanis N."/>
            <person name="Attie-Bitach T."/>
            <person name="Afford S.C."/>
            <person name="Copp A.J."/>
            <person name="Kelly D.A."/>
            <person name="Gull K."/>
            <person name="Johnson C.A."/>
        </authorList>
    </citation>
    <scope>TISSUE SPECIFICITY</scope>
    <scope>SUBCELLULAR LOCATION</scope>
    <scope>CHARACTERIZATION OF VARIANT MKS3 PRO-376</scope>
    <scope>FUNCTION</scope>
    <scope>INTERACTION WITH MKS1</scope>
</reference>
<reference key="7">
    <citation type="journal article" date="2009" name="Hum. Mol. Genet.">
        <title>Ciliary and centrosomal defects associated with mutation and depletion of the Meckel syndrome genes MKS1 and MKS3.</title>
        <authorList>
            <person name="Tammachote R."/>
            <person name="Hommerding C.J."/>
            <person name="Sinders R.M."/>
            <person name="Miller C.A."/>
            <person name="Czarnecki P.G."/>
            <person name="Leightner A.C."/>
            <person name="Salisbury J.L."/>
            <person name="Ward C.J."/>
            <person name="Torres V.E."/>
            <person name="Gattone V.H. II"/>
            <person name="Harris P.C."/>
        </authorList>
    </citation>
    <scope>FUNCTION</scope>
</reference>
<reference key="8">
    <citation type="journal article" date="2009" name="J. Biol. Chem.">
        <title>Meckel-Gruber syndrome protein MKS3 is required for endoplasmic reticulum-associated degradation of surfactant protein C.</title>
        <authorList>
            <person name="Wang M."/>
            <person name="Bridges J.P."/>
            <person name="Na C.L."/>
            <person name="Xu Y."/>
            <person name="Weaver T.E."/>
        </authorList>
    </citation>
    <scope>SUBCELLULAR LOCATION</scope>
    <scope>TOPOLOGY</scope>
    <scope>FUNCTION</scope>
    <scope>INTERACTION WITH DNAJB9; DNAJC10 AND SFTPC</scope>
</reference>
<reference key="9">
    <citation type="journal article" date="2009" name="J. Cell Sci.">
        <title>Nesprin-2 interacts with meckelin and mediates ciliogenesis via remodelling of the actin cytoskeleton.</title>
        <authorList>
            <person name="Dawe H.R."/>
            <person name="Adams M."/>
            <person name="Wheway G."/>
            <person name="Szymanska K."/>
            <person name="Logan C.V."/>
            <person name="Noegel A.A."/>
            <person name="Gull K."/>
            <person name="Johnson C.A."/>
        </authorList>
    </citation>
    <scope>SUBCELLULAR LOCATION</scope>
    <scope>INTERACTION WITH SYNE2</scope>
    <scope>FUNCTION</scope>
</reference>
<reference key="10">
    <citation type="journal article" date="2012" name="Hum. Mol. Genet.">
        <title>A meckelin-filamin A interaction mediates ciliogenesis.</title>
        <authorList>
            <person name="Adams M."/>
            <person name="Simms R.J."/>
            <person name="Abdelhamed Z."/>
            <person name="Dawe H.R."/>
            <person name="Szymanska K."/>
            <person name="Logan C.V."/>
            <person name="Wheway G."/>
            <person name="Pitt E."/>
            <person name="Gull K."/>
            <person name="Knowles M.A."/>
            <person name="Blair E."/>
            <person name="Cross S.H."/>
            <person name="Sayer J.A."/>
            <person name="Johnson C.A."/>
        </authorList>
    </citation>
    <scope>INTERACTION WITH FLNA</scope>
    <scope>SUBCELLULAR LOCATION</scope>
</reference>
<reference key="11">
    <citation type="journal article" date="2022" name="Hum. Mol. Genet.">
        <title>The ciliary transition zone protein TMEM218 synergistically interacts with the NPHP module and its reduced dosage leads to a wide range of syndromic ciliopathies.</title>
        <authorList>
            <person name="Epting D."/>
            <person name="Decker E."/>
            <person name="Ott E."/>
            <person name="Eisenberger T."/>
            <person name="Bader I."/>
            <person name="Bachmann N."/>
            <person name="Bergmann C."/>
        </authorList>
    </citation>
    <scope>INTERACTION WITH TMEM218</scope>
</reference>
<reference key="12">
    <citation type="journal article" date="2021" name="Sci. Adv.">
        <title>Structure of the human Meckel-Gruber protein Meckelin.</title>
        <authorList>
            <person name="Liu D."/>
            <person name="Qian D."/>
            <person name="Shen H."/>
            <person name="Gong D."/>
        </authorList>
    </citation>
    <scope>STRUCTURE BY ELECTRON MICROSCOPY (3.34 ANGSTROMS)</scope>
    <scope>TOPOLOGY</scope>
    <scope>REGION</scope>
    <scope>COILED COIL</scope>
    <scope>DISULFIDE BONDS</scope>
    <scope>SUBUNIT</scope>
    <scope>GLYCOSYLATION AT ASN-141; ASN-179; ASN-242 AND ASN-318</scope>
    <scope>INTERACTION WITH WNT5A</scope>
</reference>
<reference key="13">
    <citation type="journal article" date="2006" name="Nat. Genet.">
        <title>The transmembrane protein meckelin (MKS3) is mutated in Meckel-Gruber syndrome and the wpk rat.</title>
        <authorList>
            <person name="Smith U.M."/>
            <person name="Consugar M."/>
            <person name="Tee L.J."/>
            <person name="McKee B.M."/>
            <person name="Maina E.N."/>
            <person name="Whelan S."/>
            <person name="Morgan N.V."/>
            <person name="Goranson E."/>
            <person name="Gissen P."/>
            <person name="Lilliquist S."/>
            <person name="Aligianis I.A."/>
            <person name="Ward C.J."/>
            <person name="Pasha S."/>
            <person name="Punyashthiti R."/>
            <person name="Malik Sharif S."/>
            <person name="Batman P.A."/>
            <person name="Bennett C.P."/>
            <person name="Woods C.G."/>
            <person name="McKeown C."/>
            <person name="Bucourt M."/>
            <person name="Miller C.A."/>
            <person name="Cox P."/>
            <person name="Algazali L."/>
            <person name="Trembath R.C."/>
            <person name="Torres V.E."/>
            <person name="Attie-Bitach T."/>
            <person name="Kelly D.A."/>
            <person name="Maher E.R."/>
            <person name="Gattone V.H."/>
            <person name="Harris P.C."/>
            <person name="Johnson C.A."/>
        </authorList>
    </citation>
    <scope>VARIANT MKS3 PRO-376</scope>
    <scope>TISSUE SPECIFICITY</scope>
</reference>
<reference key="14">
    <citation type="journal article" date="2007" name="Am. J. Hum. Genet.">
        <title>The Meckel-Gruber syndrome gene, MKS3, is mutated in Joubert syndrome.</title>
        <authorList>
            <person name="Baala L."/>
            <person name="Romano S."/>
            <person name="Khaddour R."/>
            <person name="Saunier S."/>
            <person name="Smith U.M."/>
            <person name="Audollent S."/>
            <person name="Ozilou C."/>
            <person name="Faivre L."/>
            <person name="Laurent N."/>
            <person name="Foliguet B."/>
            <person name="Munnich A."/>
            <person name="Lyonnet S."/>
            <person name="Salomon R."/>
            <person name="Encha-Razavi F."/>
            <person name="Gubler M.-C."/>
            <person name="Boddaert N."/>
            <person name="de Lonlay P."/>
            <person name="Johnson C.A."/>
            <person name="Vekemans M."/>
            <person name="Antignac C."/>
            <person name="Attie-Bitach T."/>
        </authorList>
    </citation>
    <scope>VARIANTS JBTS6 CYS-513 AND GLU-545</scope>
</reference>
<reference key="15">
    <citation type="journal article" date="2007" name="Hum. Genet.">
        <title>Molecular diagnostics of Meckel-Gruber syndrome highlights phenotypic differences between MKS1 and MKS3.</title>
        <authorList>
            <person name="Consugar M.B."/>
            <person name="Kubly V.J."/>
            <person name="Lager D.J."/>
            <person name="Hommerding C.J."/>
            <person name="Wong W.C."/>
            <person name="Bakker E."/>
            <person name="Gattone V.H. II"/>
            <person name="Torres V.E."/>
            <person name="Breuning M.H."/>
            <person name="Harris P.C."/>
        </authorList>
    </citation>
    <scope>VARIANTS MKS3 208-ARG--ILE-995 DEL; THR-252; GLN-440; 451-ARG--ILE-995 DEL AND PRO-966</scope>
</reference>
<reference key="16">
    <citation type="journal article" date="2008" name="Nat. Genet.">
        <title>Hypomorphic mutations in syndromic encephalocele genes are associated with Bardet-Biedl syndrome.</title>
        <authorList>
            <person name="Leitch C.C."/>
            <person name="Zaghloul N.A."/>
            <person name="Davis E.E."/>
            <person name="Stoetzel C."/>
            <person name="Diaz-Font A."/>
            <person name="Rix S."/>
            <person name="Alfadhel M."/>
            <person name="Lewis R.A."/>
            <person name="Eyaid W."/>
            <person name="Banin E."/>
            <person name="Dollfus H."/>
            <person name="Beales P.L."/>
            <person name="Badano J.L."/>
            <person name="Katsanis N."/>
        </authorList>
    </citation>
    <scope>VARIANTS ALA-218; ASN-261; CYS-320 AND VAL-437</scope>
    <scope>INVOLVEMENT IN BBS14</scope>
</reference>
<reference key="17">
    <citation type="journal article" date="2008" name="Nat. Genet.">
        <authorList>
            <person name="Leitch C.C."/>
            <person name="Zaghloul N.A."/>
            <person name="Davis E.E."/>
            <person name="Stoetzel C."/>
            <person name="Diaz-Font A."/>
            <person name="Rix S."/>
            <person name="Alfadhel M."/>
            <person name="Lewis R.A."/>
            <person name="Eyaid W."/>
            <person name="Banin E."/>
            <person name="Dollfus H."/>
            <person name="Beales P.L."/>
            <person name="Badano J.L."/>
            <person name="Katsanis N."/>
        </authorList>
    </citation>
    <scope>ERRATUM OF PUBMED:18327255</scope>
</reference>
<reference key="18">
    <citation type="journal article" date="2009" name="Hum. Mutat.">
        <title>MKS3/TMEM67 mutations are a major cause of COACH Syndrome, a Joubert Syndrome related disorder with liver involvement.</title>
        <authorList>
            <person name="Brancati F."/>
            <person name="Iannicelli M."/>
            <person name="Travaglini L."/>
            <person name="Mazzotta A."/>
            <person name="Bertini E."/>
            <person name="Boltshauser E."/>
            <person name="D'Arrigo S."/>
            <person name="Emma F."/>
            <person name="Fazzi E."/>
            <person name="Gallizzi R."/>
            <person name="Gentile M."/>
            <person name="Loncarevic D."/>
            <person name="Mejaski-Bosnjak V."/>
            <person name="Pantaleoni C."/>
            <person name="Rigoli L."/>
            <person name="Salpietro C.D."/>
            <person name="Signorini S."/>
            <person name="Stringini G.R."/>
            <person name="Verloes A."/>
            <person name="Zabloka D."/>
            <person name="Dallapiccola B."/>
            <person name="Gleeson J.G."/>
            <person name="Valente E.M."/>
        </authorList>
    </citation>
    <scope>VARIANTS COACH1 ARG-130; LYS-372; GLN-440; SER-590; GLY-728; ARG-782; SER-820 AND THR-833</scope>
</reference>
<reference key="19">
    <citation type="journal article" date="2009" name="Hum. Mutat.">
        <title>Mutation spectrum of Meckel syndrome genes: one group of syndromes or several distinct groups?</title>
        <authorList>
            <person name="Tallila J."/>
            <person name="Salonen R."/>
            <person name="Kohlschmidt N."/>
            <person name="Peltonen L."/>
            <person name="Kestilae M."/>
        </authorList>
    </citation>
    <scope>VARIANTS MKS3 CYS-54; PHE-245; THR-252; CYS-296; GLN-440; CYS-513; ARG-615 AND PRO-966</scope>
</reference>
<reference key="20">
    <citation type="journal article" date="2009" name="J. Med. Genet.">
        <title>Hypomorphic mutations in meckelin (MKS3/TMEM67) cause nephronophthisis with liver fibrosis (NPHP11).</title>
        <authorList>
            <person name="Otto E.A."/>
            <person name="Tory K."/>
            <person name="Attanasio M."/>
            <person name="Zhou W."/>
            <person name="Chaki M."/>
            <person name="Paruchuri Y."/>
            <person name="Wise E.L."/>
            <person name="Wolf M.T.F."/>
            <person name="Utsch B."/>
            <person name="Becker C."/>
            <person name="Nuernberg G."/>
            <person name="Nuernberg P."/>
            <person name="Nayir A."/>
            <person name="Saunier S."/>
            <person name="Antignac C."/>
            <person name="Hildebrandt F."/>
        </authorList>
    </citation>
    <scope>VARIANTS NPHP11 LEU-290; ARG-615; SER-821 AND ARG-821</scope>
    <scope>VARIANTS JBTS6 44-GLN--ILE-995 DEL; 208-ARG--ILE-995 DEL; THR-252; ARG-615; ARG-821 AND THR-833</scope>
</reference>
<reference key="21">
    <citation type="journal article" date="2010" name="Hum. Mutat.">
        <title>Novel TMEM67 mutations and genotype-phenotype correlates in meckelin-related ciliopathies.</title>
        <authorList>
            <consortium name="International JSRD Study Group"/>
            <person name="Iannicelli M."/>
            <person name="Brancati F."/>
            <person name="Mougou-Zerelli S."/>
            <person name="Mazzotta A."/>
            <person name="Thomas S."/>
            <person name="Elkhartoufi N."/>
            <person name="Travaglini L."/>
            <person name="Gomes C."/>
            <person name="Ardissino G.L."/>
            <person name="Bertini E."/>
            <person name="Boltshauser E."/>
            <person name="Castorina P."/>
            <person name="D'Arrigo S."/>
            <person name="Fischetto R."/>
            <person name="Leroy B."/>
            <person name="Loget P."/>
            <person name="Bonniere M."/>
            <person name="Starck L."/>
            <person name="Tantau J."/>
            <person name="Gentilin B."/>
            <person name="Majore S."/>
            <person name="Swistun D."/>
            <person name="Flori E."/>
            <person name="Lalatta F."/>
            <person name="Pantaleoni C."/>
            <person name="Penzien J."/>
            <person name="Grammatico P."/>
            <person name="Dallapiccola B."/>
            <person name="Gleeson J.G."/>
            <person name="Attie-Bitach T."/>
            <person name="Valente E.M."/>
        </authorList>
    </citation>
    <scope>VARIANTS LYS-90; LYS-124; GLU-301; ASP-569; VAL-616 AND ARG-739</scope>
    <scope>VARIANTS MKS3 SER-349; LEU-441; ARG-668; GLU-786 AND CYS-843</scope>
</reference>
<reference key="22">
    <citation type="journal article" date="2010" name="J. Med. Genet.">
        <title>Mutations in 3 genes (MKS3, CC2D2A and RPGRIP1L) cause COACH syndrome (Joubert syndrome with congenital hepatic fibrosis).</title>
        <authorList>
            <person name="Doherty D."/>
            <person name="Parisi M.A."/>
            <person name="Finn L.S."/>
            <person name="Gunay-Aygun M."/>
            <person name="Al-Mateen M."/>
            <person name="Bates D."/>
            <person name="Clericuzio C."/>
            <person name="Demir H."/>
            <person name="Dorschner M."/>
            <person name="van Essen A.J."/>
            <person name="Gahl W.A."/>
            <person name="Gentile M."/>
            <person name="Gorden N.T."/>
            <person name="Hikida A."/>
            <person name="Knutzen D."/>
            <person name="Ozyurek H."/>
            <person name="Phelps I."/>
            <person name="Rosenthal P."/>
            <person name="Verloes A."/>
            <person name="Weigand H."/>
            <person name="Chance P.F."/>
            <person name="Dobyns W.B."/>
            <person name="Glass I.A."/>
        </authorList>
    </citation>
    <scope>VARIANTS COACH1 ASN-99; ARG-130; GLN-172; SER-242; THR-252; VAL-257; SER-349; LEU-358; LYS-372; GLU-376; CYS-441; SER-485; CYS-513; ARG-615; LEU-637; THR-833; PRO-841 AND CYS-942</scope>
    <scope>VARIANTS JBTS6 ARG-82 AND SER-82</scope>
</reference>
<reference key="23">
    <citation type="journal article" date="2011" name="J. Clin. Invest.">
        <title>Mutations in KIF7 link Joubert syndrome with Sonic Hedgehog signaling and microtubule dynamics.</title>
        <authorList>
            <person name="Dafinger C."/>
            <person name="Liebau M.C."/>
            <person name="Elsayed S.M."/>
            <person name="Hellenbroich Y."/>
            <person name="Boltshauser E."/>
            <person name="Korenke G.C."/>
            <person name="Fabretti F."/>
            <person name="Janecke A.R."/>
            <person name="Ebermann I."/>
            <person name="Nurnberg G."/>
            <person name="Nurnberg P."/>
            <person name="Zentgraf H."/>
            <person name="Koerber F."/>
            <person name="Addicks K."/>
            <person name="Elsobky E."/>
            <person name="Benzing T."/>
            <person name="Schermer B."/>
            <person name="Bolz H.J."/>
        </authorList>
    </citation>
    <scope>VARIANTS JBTS6 LEU-358 AND THR-833</scope>
</reference>
<reference key="24">
    <citation type="journal article" date="2015" name="Am. J. Hum. Genet.">
        <title>Joubert Syndrome in French Canadians and Identification of Mutations in CEP104.</title>
        <authorList>
            <consortium name="Care4Rare Canada Consortium"/>
            <person name="Srour M."/>
            <person name="Hamdan F.F."/>
            <person name="McKnight D."/>
            <person name="Davis E."/>
            <person name="Mandel H."/>
            <person name="Schwartzentruber J."/>
            <person name="Martin B."/>
            <person name="Patry L."/>
            <person name="Nassif C."/>
            <person name="Dionne-Laporte A."/>
            <person name="Ospina L.H."/>
            <person name="Lemyre E."/>
            <person name="Massicotte C."/>
            <person name="Laframboise R."/>
            <person name="Maranda B."/>
            <person name="Labuda D."/>
            <person name="Decarie J.C."/>
            <person name="Rypens F."/>
            <person name="Goldsher D."/>
            <person name="Fallet-Bianco C."/>
            <person name="Soucy J.F."/>
            <person name="Laberge A.M."/>
            <person name="Maftei C."/>
            <person name="Boycott K."/>
            <person name="Brais B."/>
            <person name="Boucher R.M."/>
            <person name="Rouleau G.A."/>
            <person name="Katsanis N."/>
            <person name="Majewski J."/>
            <person name="Elpeleg O."/>
            <person name="Kukolich M.K."/>
            <person name="Shalev S."/>
            <person name="Michaud J.L."/>
        </authorList>
    </citation>
    <scope>VARIANT JBTS6 ALA-711</scope>
</reference>
<reference key="25">
    <citation type="journal article" date="2015" name="Dis. Model. Mech.">
        <title>The Meckel-Gruber syndrome protein TMEM67 controls basal body positioning and epithelial branching morphogenesis in mice via the non-canonical Wnt pathway.</title>
        <authorList>
            <person name="Abdelhamed Z.A."/>
            <person name="Natarajan S."/>
            <person name="Wheway G."/>
            <person name="Inglehearn C.F."/>
            <person name="Toomes C."/>
            <person name="Johnson C.A."/>
            <person name="Jagger D.J."/>
        </authorList>
    </citation>
    <scope>CHARACTERIZATION OF VARIANTS MKS3 THR-252; SER-349; PRO-376; GLN-440; CYS-549 AND ARG-615</scope>
    <scope>INTERACTION WITH WNT5A AND ROR2</scope>
    <scope>FUNCTION</scope>
</reference>
<reference key="26">
    <citation type="journal article" date="2015" name="Int. J. Clin. Exp. Pathol.">
        <title>A missense mutation in TMEM67 causes Meckel-Gruber syndrome type 3 (MKS3): a family from China.</title>
        <authorList>
            <person name="Zhang M."/>
            <person name="Cheng J."/>
            <person name="Liu A."/>
            <person name="Wang L."/>
            <person name="Xiong L."/>
            <person name="Chen M."/>
            <person name="Sun Y."/>
            <person name="Li J."/>
            <person name="Lu Y."/>
            <person name="Yuan H."/>
            <person name="Li Y."/>
            <person name="Lu Y."/>
        </authorList>
    </citation>
    <scope>VARIANT MKS3 CYS-549</scope>
</reference>
<reference key="27">
    <citation type="journal article" date="2017" name="Sci. Rep.">
        <title>Functional validation of novel MKS3/TMEM67 mutations in COACH syndrome.</title>
        <authorList>
            <person name="Lee S.H."/>
            <person name="Nam T.S."/>
            <person name="Li W."/>
            <person name="Kim J.H."/>
            <person name="Yoon W."/>
            <person name="Choi Y.D."/>
            <person name="Kim K.H."/>
            <person name="Cai H."/>
            <person name="Kim M.J."/>
            <person name="Kim C."/>
            <person name="Choy H.E."/>
            <person name="Kim N."/>
            <person name="Chay K.O."/>
            <person name="Kim M.K."/>
            <person name="Choi S.Y."/>
        </authorList>
    </citation>
    <scope>INVOLVEMENT IN COACH1</scope>
    <scope>VARIANT COACH1 ALA-132</scope>
    <scope>CHARACTERIZATION OF VARIANT COACH1 ALA-132</scope>
</reference>
<reference key="28">
    <citation type="journal article" date="2018" name="Eur. J. Hum. Genet.">
        <title>Biallelic variants in the ciliary gene TMEM67 cause RHYNS syndrome.</title>
        <authorList>
            <consortium name="Undiagnosed Disease Network Italy"/>
            <person name="Brancati F."/>
            <person name="Camerota L."/>
            <person name="Colao E."/>
            <person name="Vega-Warner V."/>
            <person name="Zhao X."/>
            <person name="Zhang R."/>
            <person name="Bottillo I."/>
            <person name="Castori M."/>
            <person name="Caglioti A."/>
            <person name="Sangiuolo F."/>
            <person name="Novelli G."/>
            <person name="Perrotti N."/>
            <person name="Otto E.A."/>
        </authorList>
    </citation>
    <scope>VARIANTS RHYNS 208-ARG--ILE-995 DEL AND GLY-430</scope>
    <scope>INVOLVEMENT IN RHYNS</scope>
</reference>
<reference key="29">
    <citation type="journal article" date="2019" name="Clin. Genet.">
        <title>Meckel syndrome: Clinical and mutation profile in six fetuses.</title>
        <authorList>
            <person name="Radhakrishnan P."/>
            <person name="Nayak S.S."/>
            <person name="Shukla A."/>
            <person name="Lindstrand A."/>
            <person name="Girisha K.M."/>
        </authorList>
    </citation>
    <scope>VARIANT MKS3 ALA-786</scope>
</reference>
<reference key="30">
    <citation type="journal article" date="2020" name="BMC Med. Genet.">
        <title>Novel compound heterozygous TMEM67 variants in a Vietnamese family with Joubert syndrome: a case report.</title>
        <authorList>
            <person name="Bui T.P.H."/>
            <person name="Nguyen N.T."/>
            <person name="Ngo V.D."/>
            <person name="Nguyen H.N."/>
            <person name="Ly T.T.H."/>
            <person name="Do H.D."/>
            <person name="Huynh M.T."/>
        </authorList>
    </citation>
    <scope>VARIANT JBTS6 SER-242</scope>
</reference>
<reference key="31">
    <citation type="journal article" date="2022" name="Hum. Mol. Genet.">
        <title>Interpreting ciliopathy-associated missense variants of uncertain significance (VUS) in Caenorhabditis elegans.</title>
        <authorList>
            <person name="Lange K.I."/>
            <person name="Best S."/>
            <person name="Tsiropoulou S."/>
            <person name="Berry I."/>
            <person name="Johnson C.A."/>
            <person name="Blacque O.E."/>
        </authorList>
    </citation>
    <scope>CHARACTERIZATION OF VARIANT GLU-359</scope>
    <scope>CHARACTERIZATION OF VARIANT COACH1 ARG-782</scope>
    <scope>CHARACTERIZATION OF VARIANTS MKS3 PRO-376 AND GLU-786</scope>
    <scope>MUTAGENESIS OF CYS-170; THR-176; HIS-790 AND GLY-979</scope>
</reference>
<gene>
    <name type="primary">TMEM67</name>
    <name type="synonym">MKS3</name>
</gene>
<keyword id="KW-0002">3D-structure</keyword>
<keyword id="KW-0083">Bardet-Biedl syndrome</keyword>
<keyword id="KW-1003">Cell membrane</keyword>
<keyword id="KW-0966">Cell projection</keyword>
<keyword id="KW-1186">Ciliopathy</keyword>
<keyword id="KW-0969">Cilium</keyword>
<keyword id="KW-0970">Cilium biogenesis/degradation</keyword>
<keyword id="KW-0175">Coiled coil</keyword>
<keyword id="KW-0963">Cytoplasm</keyword>
<keyword id="KW-0206">Cytoskeleton</keyword>
<keyword id="KW-0209">Deafness</keyword>
<keyword id="KW-0225">Disease variant</keyword>
<keyword id="KW-1015">Disulfide bond</keyword>
<keyword id="KW-0256">Endoplasmic reticulum</keyword>
<keyword id="KW-0325">Glycoprotein</keyword>
<keyword id="KW-0991">Intellectual disability</keyword>
<keyword id="KW-0979">Joubert syndrome</keyword>
<keyword id="KW-0981">Meckel syndrome</keyword>
<keyword id="KW-0472">Membrane</keyword>
<keyword id="KW-0983">Nephronophthisis</keyword>
<keyword id="KW-0550">Obesity</keyword>
<keyword id="KW-1267">Proteomics identification</keyword>
<keyword id="KW-1185">Reference proteome</keyword>
<keyword id="KW-0682">Retinitis pigmentosa</keyword>
<keyword id="KW-0732">Signal</keyword>
<keyword id="KW-0812">Transmembrane</keyword>
<keyword id="KW-1133">Transmembrane helix</keyword>
<protein>
    <recommendedName>
        <fullName>Meckelin</fullName>
    </recommendedName>
    <alternativeName>
        <fullName>Meckel syndrome type 3 protein</fullName>
    </alternativeName>
    <alternativeName>
        <fullName>Transmembrane protein 67</fullName>
    </alternativeName>
</protein>